<keyword id="KW-0175">Coiled coil</keyword>
<keyword id="KW-1185">Reference proteome</keyword>
<keyword id="KW-0946">Virion</keyword>
<comment type="subcellular location">
    <subcellularLocation>
        <location evidence="3">Virion</location>
    </subcellularLocation>
</comment>
<proteinExistence type="evidence at protein level"/>
<accession>Q5UNX8</accession>
<organism>
    <name type="scientific">Acanthamoeba polyphaga mimivirus</name>
    <name type="common">APMV</name>
    <dbReference type="NCBI Taxonomy" id="212035"/>
    <lineage>
        <taxon>Viruses</taxon>
        <taxon>Varidnaviria</taxon>
        <taxon>Bamfordvirae</taxon>
        <taxon>Nucleocytoviricota</taxon>
        <taxon>Megaviricetes</taxon>
        <taxon>Imitervirales</taxon>
        <taxon>Mimiviridae</taxon>
        <taxon>Megamimivirinae</taxon>
        <taxon>Mimivirus</taxon>
        <taxon>Mimivirus bradfordmassiliense</taxon>
    </lineage>
</organism>
<evidence type="ECO:0000255" key="1"/>
<evidence type="ECO:0000256" key="2">
    <source>
        <dbReference type="SAM" id="MobiDB-lite"/>
    </source>
</evidence>
<evidence type="ECO:0000269" key="3">
    <source>
    </source>
</evidence>
<gene>
    <name type="ordered locus">MIMI_R722</name>
</gene>
<organismHost>
    <name type="scientific">Acanthamoeba polyphaga</name>
    <name type="common">Amoeba</name>
    <dbReference type="NCBI Taxonomy" id="5757"/>
</organismHost>
<feature type="chain" id="PRO_0000071334" description="Uncharacterized protein R722">
    <location>
        <begin position="1"/>
        <end position="872"/>
    </location>
</feature>
<feature type="region of interest" description="Disordered" evidence="2">
    <location>
        <begin position="595"/>
        <end position="736"/>
    </location>
</feature>
<feature type="region of interest" description="Disordered" evidence="2">
    <location>
        <begin position="844"/>
        <end position="872"/>
    </location>
</feature>
<feature type="coiled-coil region" evidence="1">
    <location>
        <begin position="496"/>
        <end position="524"/>
    </location>
</feature>
<feature type="compositionally biased region" description="Polar residues" evidence="2">
    <location>
        <begin position="615"/>
        <end position="659"/>
    </location>
</feature>
<feature type="compositionally biased region" description="Polar residues" evidence="2">
    <location>
        <begin position="670"/>
        <end position="686"/>
    </location>
</feature>
<feature type="compositionally biased region" description="Low complexity" evidence="2">
    <location>
        <begin position="687"/>
        <end position="736"/>
    </location>
</feature>
<reference key="1">
    <citation type="journal article" date="2004" name="Science">
        <title>The 1.2-megabase genome sequence of Mimivirus.</title>
        <authorList>
            <person name="Raoult D."/>
            <person name="Audic S."/>
            <person name="Robert C."/>
            <person name="Abergel C."/>
            <person name="Renesto P."/>
            <person name="Ogata H."/>
            <person name="La Scola B."/>
            <person name="Susan M."/>
            <person name="Claverie J.-M."/>
        </authorList>
    </citation>
    <scope>NUCLEOTIDE SEQUENCE [LARGE SCALE GENOMIC DNA]</scope>
    <source>
        <strain>Rowbotham-Bradford</strain>
    </source>
</reference>
<reference key="2">
    <citation type="journal article" date="2006" name="J. Virol.">
        <title>Mimivirus giant particles incorporate a large fraction of anonymous and unique gene products.</title>
        <authorList>
            <person name="Renesto P."/>
            <person name="Abergel C."/>
            <person name="Decloquement P."/>
            <person name="Moinier D."/>
            <person name="Azza S."/>
            <person name="Ogata H."/>
            <person name="Fourquet P."/>
            <person name="Gorvel J.-P."/>
            <person name="Claverie J.-M."/>
            <person name="Raoult D."/>
        </authorList>
    </citation>
    <scope>IDENTIFICATION BY MASS SPECTROMETRY [LARGE SCALE ANALYSIS]</scope>
    <scope>SUBCELLULAR LOCATION</scope>
</reference>
<dbReference type="EMBL" id="AY653733">
    <property type="protein sequence ID" value="AAV50982.1"/>
    <property type="molecule type" value="Genomic_DNA"/>
</dbReference>
<dbReference type="SMR" id="Q5UNX8"/>
<dbReference type="KEGG" id="vg:9925376"/>
<dbReference type="Proteomes" id="UP000001134">
    <property type="component" value="Genome"/>
</dbReference>
<dbReference type="GO" id="GO:0044423">
    <property type="term" value="C:virion component"/>
    <property type="evidence" value="ECO:0007669"/>
    <property type="project" value="UniProtKB-KW"/>
</dbReference>
<dbReference type="GO" id="GO:0008237">
    <property type="term" value="F:metallopeptidase activity"/>
    <property type="evidence" value="ECO:0007669"/>
    <property type="project" value="InterPro"/>
</dbReference>
<dbReference type="Gene3D" id="3.40.390.10">
    <property type="entry name" value="Collagenase (Catalytic Domain)"/>
    <property type="match status" value="1"/>
</dbReference>
<dbReference type="InterPro" id="IPR024079">
    <property type="entry name" value="MetalloPept_cat_dom_sf"/>
</dbReference>
<dbReference type="InterPro" id="IPR008754">
    <property type="entry name" value="Peptidase_M43"/>
</dbReference>
<dbReference type="Pfam" id="PF05572">
    <property type="entry name" value="Peptidase_M43"/>
    <property type="match status" value="1"/>
</dbReference>
<dbReference type="SUPFAM" id="SSF55486">
    <property type="entry name" value="Metalloproteases ('zincins'), catalytic domain"/>
    <property type="match status" value="1"/>
</dbReference>
<protein>
    <recommendedName>
        <fullName>Uncharacterized protein R722</fullName>
    </recommendedName>
</protein>
<name>YR722_MIMIV</name>
<sequence>MSKQNNRIIPTNRDKKICRKCGYHVCSDHYVANLNKHHEIIKNHNDKINRVNMNDIINIKLLFHILLPRDSFNKDKVISRTHDIVCSLNDDFNNYSSNTNTMNNSKYKNIIKQIFGANTIKQGIYLSSDYQKIIPEKSSNIVFELGEIYYYPVKHKLNLSKYDDISDVESQRHEIEQYVRSSEAGAYEPKKFVNIWIIDMIDTSILGFSNFPWEVVNSCHGIIANRRCFFPEEYGESNYSSFKTFTHHMGHHLGLLHVYNPNHCQSKSCDSSGGSKSIVLDFIIDPLDKINNKKLHIDKEYNPYFTNFMDFTCDKYVSNFTVRQIQEMRFMINKFKPKLNSLLNESQCPIPKYNPETDTISATINFNQRFSNREGSAVPSYEKADNPRMSASQGMINPEIFMGIADPQQPFLKPTVVPTNKNINDLIPNLCGTTLPTRKSGNTQDQIIENIQNVLPSSYMNSEQPKDAYADFKKKYNIIYSEDSYIINHPHNPYLLQQHHQDISAMQQQILEEKNQLRRATIDVPVCGNPYNAGQTVGHYVPPINPEEIDRFNAKRQFAESFNPEMFRPNDPLMYQSPQVDPSCCQKPMDPRLYRPAVPSDPRMGQYMTDPRLFQNGNQTQYQSNPQSNPQFNHQAYSQPNPQAYPQSNPQMYPQQTTFPPRYDPRMNNPYASRATSNGLSPNNVVQQYQSYYDNPSNQQSNQQSNQQSNQQPNQQPNQQPNQQPNQQPNQQSVQQCNQVNQEALNDLRSRNIKASPTVSPGDLINKMNRVNEQLQNIKSSLQQDPDTSTTTRVNTAVGQRSFGVPRVSNDQSKPKFNKFGQPITNSPFVSGNVASTAMSGKITKENISVNPRDASKAPKSRFQRTKPPQAV</sequence>